<proteinExistence type="inferred from homology"/>
<name>EF1B_PYRAE</name>
<sequence>MSAEVALVYRVLPDSAEVNIEKLKNDVINKLAPKYKVDKVEVEEIGFGIKALRLYIRMPESDEYSSDEIEELLRSVEGVGGYELEYFSRLSF</sequence>
<comment type="function">
    <text evidence="1">Promotes the exchange of GDP for GTP in EF-1-alpha/GDP, thus allowing the regeneration of EF-1-alpha/GTP that could then be used to form the ternary complex EF-1-alpha/GTP/AAtRNA.</text>
</comment>
<comment type="similarity">
    <text evidence="2">Belongs to the EF-1-beta/EF-1-delta family.</text>
</comment>
<accession>Q8ZYN5</accession>
<organism>
    <name type="scientific">Pyrobaculum aerophilum (strain ATCC 51768 / DSM 7523 / JCM 9630 / CIP 104966 / NBRC 100827 / IM2)</name>
    <dbReference type="NCBI Taxonomy" id="178306"/>
    <lineage>
        <taxon>Archaea</taxon>
        <taxon>Thermoproteota</taxon>
        <taxon>Thermoprotei</taxon>
        <taxon>Thermoproteales</taxon>
        <taxon>Thermoproteaceae</taxon>
        <taxon>Pyrobaculum</taxon>
    </lineage>
</organism>
<gene>
    <name type="primary">ef1b</name>
    <name type="ordered locus">PAE0695</name>
</gene>
<protein>
    <recommendedName>
        <fullName>Elongation factor 1-beta</fullName>
        <shortName>EF-1-beta</shortName>
    </recommendedName>
    <alternativeName>
        <fullName>aEF-1beta</fullName>
    </alternativeName>
</protein>
<reference key="1">
    <citation type="journal article" date="2002" name="Proc. Natl. Acad. Sci. U.S.A.">
        <title>Genome sequence of the hyperthermophilic crenarchaeon Pyrobaculum aerophilum.</title>
        <authorList>
            <person name="Fitz-Gibbon S.T."/>
            <person name="Ladner H."/>
            <person name="Kim U.-J."/>
            <person name="Stetter K.O."/>
            <person name="Simon M.I."/>
            <person name="Miller J.H."/>
        </authorList>
    </citation>
    <scope>NUCLEOTIDE SEQUENCE [LARGE SCALE GENOMIC DNA]</scope>
    <source>
        <strain>ATCC 51768 / DSM 7523 / JCM 9630 / CIP 104966 / NBRC 100827 / IM2</strain>
    </source>
</reference>
<feature type="chain" id="PRO_0000155063" description="Elongation factor 1-beta">
    <location>
        <begin position="1"/>
        <end position="92"/>
    </location>
</feature>
<dbReference type="EMBL" id="AE009441">
    <property type="protein sequence ID" value="AAL62958.1"/>
    <property type="molecule type" value="Genomic_DNA"/>
</dbReference>
<dbReference type="RefSeq" id="WP_011007430.1">
    <property type="nucleotide sequence ID" value="NC_003364.1"/>
</dbReference>
<dbReference type="SMR" id="Q8ZYN5"/>
<dbReference type="STRING" id="178306.PAE0695"/>
<dbReference type="EnsemblBacteria" id="AAL62958">
    <property type="protein sequence ID" value="AAL62958"/>
    <property type="gene ID" value="PAE0695"/>
</dbReference>
<dbReference type="GeneID" id="1465184"/>
<dbReference type="KEGG" id="pai:PAE0695"/>
<dbReference type="PATRIC" id="fig|178306.9.peg.503"/>
<dbReference type="eggNOG" id="arCOG01988">
    <property type="taxonomic scope" value="Archaea"/>
</dbReference>
<dbReference type="HOGENOM" id="CLU_165896_1_0_2"/>
<dbReference type="InParanoid" id="Q8ZYN5"/>
<dbReference type="Proteomes" id="UP000002439">
    <property type="component" value="Chromosome"/>
</dbReference>
<dbReference type="GO" id="GO:0003746">
    <property type="term" value="F:translation elongation factor activity"/>
    <property type="evidence" value="ECO:0007669"/>
    <property type="project" value="UniProtKB-UniRule"/>
</dbReference>
<dbReference type="CDD" id="cd00292">
    <property type="entry name" value="EF1B"/>
    <property type="match status" value="1"/>
</dbReference>
<dbReference type="Gene3D" id="3.30.70.60">
    <property type="match status" value="1"/>
</dbReference>
<dbReference type="HAMAP" id="MF_00043">
    <property type="entry name" value="EF1_beta"/>
    <property type="match status" value="1"/>
</dbReference>
<dbReference type="InterPro" id="IPR036219">
    <property type="entry name" value="eEF-1beta-like_sf"/>
</dbReference>
<dbReference type="InterPro" id="IPR014038">
    <property type="entry name" value="EF1B_bsu/dsu_GNE"/>
</dbReference>
<dbReference type="InterPro" id="IPR014717">
    <property type="entry name" value="Transl_elong_EF1B/ribsomal_bS6"/>
</dbReference>
<dbReference type="InterPro" id="IPR004542">
    <property type="entry name" value="Transl_elong_EF1B_B_arc"/>
</dbReference>
<dbReference type="NCBIfam" id="NF001670">
    <property type="entry name" value="PRK00435.1"/>
    <property type="match status" value="1"/>
</dbReference>
<dbReference type="PANTHER" id="PTHR39647">
    <property type="entry name" value="ELONGATION FACTOR 1-BETA"/>
    <property type="match status" value="1"/>
</dbReference>
<dbReference type="PANTHER" id="PTHR39647:SF1">
    <property type="entry name" value="ELONGATION FACTOR 1-BETA"/>
    <property type="match status" value="1"/>
</dbReference>
<dbReference type="Pfam" id="PF00736">
    <property type="entry name" value="EF1_GNE"/>
    <property type="match status" value="1"/>
</dbReference>
<dbReference type="PIRSF" id="PIRSF006521">
    <property type="entry name" value="Transl_elong_EF1B_B_arc"/>
    <property type="match status" value="1"/>
</dbReference>
<dbReference type="SMART" id="SM00888">
    <property type="entry name" value="EF1_GNE"/>
    <property type="match status" value="1"/>
</dbReference>
<dbReference type="SUPFAM" id="SSF54984">
    <property type="entry name" value="eEF-1beta-like"/>
    <property type="match status" value="1"/>
</dbReference>
<evidence type="ECO:0000250" key="1"/>
<evidence type="ECO:0000305" key="2"/>
<keyword id="KW-0251">Elongation factor</keyword>
<keyword id="KW-0648">Protein biosynthesis</keyword>
<keyword id="KW-1185">Reference proteome</keyword>